<comment type="function">
    <text evidence="1">Contacts the emerging nascent chain on the ribosome.</text>
</comment>
<comment type="subunit">
    <text evidence="1">Homodimer. Interacts with the ribosome. Binds ribosomal RNA.</text>
</comment>
<comment type="similarity">
    <text evidence="1">Belongs to the NAC-alpha family.</text>
</comment>
<comment type="sequence caution" evidence="2">
    <conflict type="erroneous initiation">
        <sequence resource="EMBL-CDS" id="BAA82798"/>
    </conflict>
</comment>
<dbReference type="EMBL" id="AB023294">
    <property type="protein sequence ID" value="BAA82798.1"/>
    <property type="status" value="ALT_INIT"/>
    <property type="molecule type" value="Genomic_DNA"/>
</dbReference>
<dbReference type="EMBL" id="AL445067">
    <property type="protein sequence ID" value="CAC12567.1"/>
    <property type="molecule type" value="Genomic_DNA"/>
</dbReference>
<dbReference type="PIR" id="T37334">
    <property type="entry name" value="T37334"/>
</dbReference>
<dbReference type="RefSeq" id="WP_010901850.1">
    <property type="nucleotide sequence ID" value="NC_002578.1"/>
</dbReference>
<dbReference type="SMR" id="Q9HI94"/>
<dbReference type="STRING" id="273075.gene:9572676"/>
<dbReference type="PaxDb" id="273075-Ta1447"/>
<dbReference type="EnsemblBacteria" id="CAC12567">
    <property type="protein sequence ID" value="CAC12567"/>
    <property type="gene ID" value="CAC12567"/>
</dbReference>
<dbReference type="KEGG" id="tac:Ta1447"/>
<dbReference type="eggNOG" id="arCOG04061">
    <property type="taxonomic scope" value="Archaea"/>
</dbReference>
<dbReference type="HOGENOM" id="CLU_146475_1_0_2"/>
<dbReference type="InParanoid" id="Q9HI94"/>
<dbReference type="OrthoDB" id="53273at2157"/>
<dbReference type="Proteomes" id="UP000001024">
    <property type="component" value="Chromosome"/>
</dbReference>
<dbReference type="GO" id="GO:0003723">
    <property type="term" value="F:RNA binding"/>
    <property type="evidence" value="ECO:0007669"/>
    <property type="project" value="UniProtKB-UniRule"/>
</dbReference>
<dbReference type="GO" id="GO:0015031">
    <property type="term" value="P:protein transport"/>
    <property type="evidence" value="ECO:0007669"/>
    <property type="project" value="UniProtKB-UniRule"/>
</dbReference>
<dbReference type="CDD" id="cd22054">
    <property type="entry name" value="NAC_NACA"/>
    <property type="match status" value="1"/>
</dbReference>
<dbReference type="CDD" id="cd14359">
    <property type="entry name" value="UBA_AeNAC"/>
    <property type="match status" value="1"/>
</dbReference>
<dbReference type="Gene3D" id="1.10.8.10">
    <property type="entry name" value="DNA helicase RuvA subunit, C-terminal domain"/>
    <property type="match status" value="1"/>
</dbReference>
<dbReference type="Gene3D" id="2.20.70.30">
    <property type="entry name" value="Nascent polypeptide-associated complex domain"/>
    <property type="match status" value="1"/>
</dbReference>
<dbReference type="HAMAP" id="MF_00814">
    <property type="entry name" value="NAC_arch"/>
    <property type="match status" value="1"/>
</dbReference>
<dbReference type="InterPro" id="IPR044034">
    <property type="entry name" value="NAC-like_UBA"/>
</dbReference>
<dbReference type="InterPro" id="IPR038187">
    <property type="entry name" value="NAC_A/B_dom_sf"/>
</dbReference>
<dbReference type="InterPro" id="IPR005231">
    <property type="entry name" value="NAC_arc"/>
</dbReference>
<dbReference type="InterPro" id="IPR002715">
    <property type="entry name" value="Nas_poly-pep-assoc_cplx_dom"/>
</dbReference>
<dbReference type="InterPro" id="IPR009060">
    <property type="entry name" value="UBA-like_sf"/>
</dbReference>
<dbReference type="NCBIfam" id="TIGR00264">
    <property type="entry name" value="archaeal-type nascent polypeptide-associated complex protein"/>
    <property type="match status" value="1"/>
</dbReference>
<dbReference type="Pfam" id="PF01849">
    <property type="entry name" value="NAC"/>
    <property type="match status" value="1"/>
</dbReference>
<dbReference type="Pfam" id="PF19026">
    <property type="entry name" value="UBA_HYPK"/>
    <property type="match status" value="1"/>
</dbReference>
<dbReference type="SMART" id="SM01407">
    <property type="entry name" value="NAC"/>
    <property type="match status" value="1"/>
</dbReference>
<dbReference type="SUPFAM" id="SSF46934">
    <property type="entry name" value="UBA-like"/>
    <property type="match status" value="1"/>
</dbReference>
<dbReference type="PROSITE" id="PS51151">
    <property type="entry name" value="NAC_AB"/>
    <property type="match status" value="1"/>
</dbReference>
<proteinExistence type="inferred from homology"/>
<organism>
    <name type="scientific">Thermoplasma acidophilum (strain ATCC 25905 / DSM 1728 / JCM 9062 / NBRC 15155 / AMRC-C165)</name>
    <dbReference type="NCBI Taxonomy" id="273075"/>
    <lineage>
        <taxon>Archaea</taxon>
        <taxon>Methanobacteriati</taxon>
        <taxon>Thermoplasmatota</taxon>
        <taxon>Thermoplasmata</taxon>
        <taxon>Thermoplasmatales</taxon>
        <taxon>Thermoplasmataceae</taxon>
        <taxon>Thermoplasma</taxon>
    </lineage>
</organism>
<reference key="1">
    <citation type="submission" date="1999-02" db="EMBL/GenBank/DDBJ databases">
        <authorList>
            <person name="Iwasaki T."/>
            <person name="Iwasaki H."/>
        </authorList>
    </citation>
    <scope>NUCLEOTIDE SEQUENCE [GENOMIC DNA]</scope>
    <source>
        <strain>HO-62</strain>
    </source>
</reference>
<reference key="2">
    <citation type="journal article" date="2000" name="Nature">
        <title>The genome sequence of the thermoacidophilic scavenger Thermoplasma acidophilum.</title>
        <authorList>
            <person name="Ruepp A."/>
            <person name="Graml W."/>
            <person name="Santos-Martinez M.-L."/>
            <person name="Koretke K.K."/>
            <person name="Volker C."/>
            <person name="Mewes H.-W."/>
            <person name="Frishman D."/>
            <person name="Stocker S."/>
            <person name="Lupas A.N."/>
            <person name="Baumeister W."/>
        </authorList>
    </citation>
    <scope>NUCLEOTIDE SEQUENCE [LARGE SCALE GENOMIC DNA]</scope>
    <source>
        <strain>ATCC 25905 / DSM 1728 / JCM 9062 / NBRC 15155 / AMRC-C165</strain>
    </source>
</reference>
<keyword id="KW-0653">Protein transport</keyword>
<keyword id="KW-1185">Reference proteome</keyword>
<keyword id="KW-0694">RNA-binding</keyword>
<keyword id="KW-0813">Transport</keyword>
<sequence length="119" mass="13410">MIPGRMNSREMRRLMAQMGIKSTEMDDVTKVIFKGKTKDYVIDNAQVTMIEAQGVKTFQVVGTMREVPKEPEEKKEESFPEDDIKLVMEQASVSREKAIEALKASGGEPAQAIMNLMQK</sequence>
<protein>
    <recommendedName>
        <fullName evidence="1">Nascent polypeptide-associated complex protein</fullName>
    </recommendedName>
</protein>
<evidence type="ECO:0000255" key="1">
    <source>
        <dbReference type="HAMAP-Rule" id="MF_00814"/>
    </source>
</evidence>
<evidence type="ECO:0000305" key="2"/>
<feature type="chain" id="PRO_0000135613" description="Nascent polypeptide-associated complex protein">
    <location>
        <begin position="1"/>
        <end position="119"/>
    </location>
</feature>
<feature type="domain" description="NAC-A/B" evidence="1">
    <location>
        <begin position="5"/>
        <end position="73"/>
    </location>
</feature>
<feature type="sequence conflict" description="In Ref. 1; BAA82798." evidence="2" ref="1">
    <original>E</original>
    <variation>D</variation>
    <location>
        <position position="89"/>
    </location>
</feature>
<feature type="sequence conflict" description="In Ref. 1; BAA82798." evidence="2" ref="1">
    <original>M</original>
    <variation>I</variation>
    <location>
        <position position="114"/>
    </location>
</feature>
<accession>Q9HI94</accession>
<accession>Q9V303</accession>
<gene>
    <name evidence="1" type="primary">nac</name>
    <name type="ordered locus">Ta1447</name>
</gene>
<name>NAC_THEAC</name>